<keyword id="KW-0963">Cytoplasm</keyword>
<keyword id="KW-1185">Reference proteome</keyword>
<keyword id="KW-0704">Schiff base</keyword>
<keyword id="KW-0784">Thiamine biosynthesis</keyword>
<keyword id="KW-0808">Transferase</keyword>
<comment type="function">
    <text evidence="1">Catalyzes the rearrangement of 1-deoxy-D-xylulose 5-phosphate (DXP) to produce the thiazole phosphate moiety of thiamine. Sulfur is provided by the thiocarboxylate moiety of the carrier protein ThiS. In vitro, sulfur can be provided by H(2)S.</text>
</comment>
<comment type="catalytic activity">
    <reaction evidence="1">
        <text>[ThiS sulfur-carrier protein]-C-terminal-Gly-aminoethanethioate + 2-iminoacetate + 1-deoxy-D-xylulose 5-phosphate = [ThiS sulfur-carrier protein]-C-terminal Gly-Gly + 2-[(2R,5Z)-2-carboxy-4-methylthiazol-5(2H)-ylidene]ethyl phosphate + 2 H2O + H(+)</text>
        <dbReference type="Rhea" id="RHEA:26297"/>
        <dbReference type="Rhea" id="RHEA-COMP:12909"/>
        <dbReference type="Rhea" id="RHEA-COMP:19908"/>
        <dbReference type="ChEBI" id="CHEBI:15377"/>
        <dbReference type="ChEBI" id="CHEBI:15378"/>
        <dbReference type="ChEBI" id="CHEBI:57792"/>
        <dbReference type="ChEBI" id="CHEBI:62899"/>
        <dbReference type="ChEBI" id="CHEBI:77846"/>
        <dbReference type="ChEBI" id="CHEBI:90778"/>
        <dbReference type="ChEBI" id="CHEBI:232372"/>
        <dbReference type="EC" id="2.8.1.10"/>
    </reaction>
</comment>
<comment type="pathway">
    <text evidence="1">Cofactor biosynthesis; thiamine diphosphate biosynthesis.</text>
</comment>
<comment type="subunit">
    <text evidence="1">Homotetramer. Forms heterodimers with either ThiH or ThiS.</text>
</comment>
<comment type="subcellular location">
    <subcellularLocation>
        <location evidence="1">Cytoplasm</location>
    </subcellularLocation>
</comment>
<comment type="similarity">
    <text evidence="1">Belongs to the ThiG family.</text>
</comment>
<proteinExistence type="inferred from homology"/>
<dbReference type="EC" id="2.8.1.10" evidence="1"/>
<dbReference type="EMBL" id="CP000250">
    <property type="protein sequence ID" value="ABD06664.1"/>
    <property type="molecule type" value="Genomic_DNA"/>
</dbReference>
<dbReference type="RefSeq" id="WP_011440852.1">
    <property type="nucleotide sequence ID" value="NC_007778.1"/>
</dbReference>
<dbReference type="SMR" id="Q2IYP6"/>
<dbReference type="STRING" id="316058.RPB_1956"/>
<dbReference type="KEGG" id="rpb:RPB_1956"/>
<dbReference type="eggNOG" id="COG2022">
    <property type="taxonomic scope" value="Bacteria"/>
</dbReference>
<dbReference type="HOGENOM" id="CLU_062233_1_0_5"/>
<dbReference type="OrthoDB" id="9805935at2"/>
<dbReference type="UniPathway" id="UPA00060"/>
<dbReference type="Proteomes" id="UP000008809">
    <property type="component" value="Chromosome"/>
</dbReference>
<dbReference type="GO" id="GO:0005737">
    <property type="term" value="C:cytoplasm"/>
    <property type="evidence" value="ECO:0007669"/>
    <property type="project" value="UniProtKB-SubCell"/>
</dbReference>
<dbReference type="GO" id="GO:1990107">
    <property type="term" value="F:thiazole synthase activity"/>
    <property type="evidence" value="ECO:0007669"/>
    <property type="project" value="UniProtKB-EC"/>
</dbReference>
<dbReference type="GO" id="GO:0009229">
    <property type="term" value="P:thiamine diphosphate biosynthetic process"/>
    <property type="evidence" value="ECO:0007669"/>
    <property type="project" value="UniProtKB-UniRule"/>
</dbReference>
<dbReference type="CDD" id="cd04728">
    <property type="entry name" value="ThiG"/>
    <property type="match status" value="1"/>
</dbReference>
<dbReference type="Gene3D" id="3.20.20.70">
    <property type="entry name" value="Aldolase class I"/>
    <property type="match status" value="1"/>
</dbReference>
<dbReference type="HAMAP" id="MF_00443">
    <property type="entry name" value="ThiG"/>
    <property type="match status" value="1"/>
</dbReference>
<dbReference type="InterPro" id="IPR013785">
    <property type="entry name" value="Aldolase_TIM"/>
</dbReference>
<dbReference type="InterPro" id="IPR033983">
    <property type="entry name" value="Thiazole_synthase_ThiG"/>
</dbReference>
<dbReference type="InterPro" id="IPR008867">
    <property type="entry name" value="ThiG"/>
</dbReference>
<dbReference type="PANTHER" id="PTHR34266">
    <property type="entry name" value="THIAZOLE SYNTHASE"/>
    <property type="match status" value="1"/>
</dbReference>
<dbReference type="PANTHER" id="PTHR34266:SF2">
    <property type="entry name" value="THIAZOLE SYNTHASE"/>
    <property type="match status" value="1"/>
</dbReference>
<dbReference type="Pfam" id="PF05690">
    <property type="entry name" value="ThiG"/>
    <property type="match status" value="1"/>
</dbReference>
<dbReference type="SUPFAM" id="SSF110399">
    <property type="entry name" value="ThiG-like"/>
    <property type="match status" value="1"/>
</dbReference>
<feature type="chain" id="PRO_1000026035" description="Thiazole synthase">
    <location>
        <begin position="1"/>
        <end position="260"/>
    </location>
</feature>
<feature type="active site" description="Schiff-base intermediate with DXP" evidence="1">
    <location>
        <position position="96"/>
    </location>
</feature>
<feature type="binding site" evidence="1">
    <location>
        <position position="157"/>
    </location>
    <ligand>
        <name>1-deoxy-D-xylulose 5-phosphate</name>
        <dbReference type="ChEBI" id="CHEBI:57792"/>
    </ligand>
</feature>
<feature type="binding site" evidence="1">
    <location>
        <begin position="184"/>
        <end position="185"/>
    </location>
    <ligand>
        <name>1-deoxy-D-xylulose 5-phosphate</name>
        <dbReference type="ChEBI" id="CHEBI:57792"/>
    </ligand>
</feature>
<feature type="binding site" evidence="1">
    <location>
        <begin position="206"/>
        <end position="207"/>
    </location>
    <ligand>
        <name>1-deoxy-D-xylulose 5-phosphate</name>
        <dbReference type="ChEBI" id="CHEBI:57792"/>
    </ligand>
</feature>
<sequence>MVKFYDREISSRLLIGSALYPSPAIMQDSIRESGADIVTVSLRREAAGGKAGDQFWSLIRELGVTVLPNTAGCRSVREAVTTAKLARELFGTAWIKLEVIADNDTLQPDVVGLVEAAQILTKDGFEVFPYCTEDLSVAMRLVDAGCRVIMPWAAPIGSARGIVARDALKLLRDRLPDITLVVDAGLGAPSHAAEAMELGYDAVLLNTAIAKAEDPVAMARAFKLAVEAGRTGFEAGLMGARDFASPSTPVIGTPFWHAVS</sequence>
<accession>Q2IYP6</accession>
<protein>
    <recommendedName>
        <fullName evidence="1">Thiazole synthase</fullName>
        <ecNumber evidence="1">2.8.1.10</ecNumber>
    </recommendedName>
</protein>
<organism>
    <name type="scientific">Rhodopseudomonas palustris (strain HaA2)</name>
    <dbReference type="NCBI Taxonomy" id="316058"/>
    <lineage>
        <taxon>Bacteria</taxon>
        <taxon>Pseudomonadati</taxon>
        <taxon>Pseudomonadota</taxon>
        <taxon>Alphaproteobacteria</taxon>
        <taxon>Hyphomicrobiales</taxon>
        <taxon>Nitrobacteraceae</taxon>
        <taxon>Rhodopseudomonas</taxon>
    </lineage>
</organism>
<reference key="1">
    <citation type="submission" date="2006-01" db="EMBL/GenBank/DDBJ databases">
        <title>Complete sequence of Rhodopseudomonas palustris HaA2.</title>
        <authorList>
            <consortium name="US DOE Joint Genome Institute"/>
            <person name="Copeland A."/>
            <person name="Lucas S."/>
            <person name="Lapidus A."/>
            <person name="Barry K."/>
            <person name="Detter J.C."/>
            <person name="Glavina T."/>
            <person name="Hammon N."/>
            <person name="Israni S."/>
            <person name="Pitluck S."/>
            <person name="Chain P."/>
            <person name="Malfatti S."/>
            <person name="Shin M."/>
            <person name="Vergez L."/>
            <person name="Schmutz J."/>
            <person name="Larimer F."/>
            <person name="Land M."/>
            <person name="Hauser L."/>
            <person name="Pelletier D.A."/>
            <person name="Kyrpides N."/>
            <person name="Anderson I."/>
            <person name="Oda Y."/>
            <person name="Harwood C.S."/>
            <person name="Richardson P."/>
        </authorList>
    </citation>
    <scope>NUCLEOTIDE SEQUENCE [LARGE SCALE GENOMIC DNA]</scope>
    <source>
        <strain>HaA2</strain>
    </source>
</reference>
<gene>
    <name evidence="1" type="primary">thiG</name>
    <name type="ordered locus">RPB_1956</name>
</gene>
<evidence type="ECO:0000255" key="1">
    <source>
        <dbReference type="HAMAP-Rule" id="MF_00443"/>
    </source>
</evidence>
<name>THIG_RHOP2</name>